<comment type="similarity">
    <text evidence="1">Belongs to the UPF0229 family.</text>
</comment>
<organism>
    <name type="scientific">Vibrio vulnificus (strain CMCP6)</name>
    <dbReference type="NCBI Taxonomy" id="216895"/>
    <lineage>
        <taxon>Bacteria</taxon>
        <taxon>Pseudomonadati</taxon>
        <taxon>Pseudomonadota</taxon>
        <taxon>Gammaproteobacteria</taxon>
        <taxon>Vibrionales</taxon>
        <taxon>Vibrionaceae</taxon>
        <taxon>Vibrio</taxon>
    </lineage>
</organism>
<reference key="1">
    <citation type="submission" date="2002-12" db="EMBL/GenBank/DDBJ databases">
        <title>Complete genome sequence of Vibrio vulnificus CMCP6.</title>
        <authorList>
            <person name="Rhee J.H."/>
            <person name="Kim S.Y."/>
            <person name="Chung S.S."/>
            <person name="Kim J.J."/>
            <person name="Moon Y.H."/>
            <person name="Jeong H."/>
            <person name="Choy H.E."/>
        </authorList>
    </citation>
    <scope>NUCLEOTIDE SEQUENCE [LARGE SCALE GENOMIC DNA]</scope>
    <source>
        <strain>CMCP6</strain>
    </source>
</reference>
<sequence length="423" mass="48756">MAQFIDRRLNGKNKSAVNRQRFMRRYKEQIKESVADAVNRRSITNTETGEDVAIPHKDIKEPLFHQGKGGLRERVHPGNDQFITGDKIERPKGGQGGGGAGDGDASADGEGQDDFVFQISKDEYLDLLFEDLALPNLKKNQVNKITEWKKHRAGYQTAGMPSNISIVRSLQQSLARRTAMSAGKKRLLHELELELERIQNQEPAQKLEEMKLKQEIAELRKAIESVPFIDTFDLRFKNYERKPVPSSQAVMFCLMDVSGSMDQATKDIAKRFYVLLYLFLNRTYENVEVVFIRHHTQAKEVDEHEFFYSQETGGTIVSSALKLMDEIVKARYPVGEWNIYAAQASDGDNWADDSPRCKELLTSKLLPNCQYYAYIEITRRSHQTLWHEYEKLEESFDNFAMKNIRSVEDIFPVFRELFHKETA</sequence>
<dbReference type="EMBL" id="AE016795">
    <property type="protein sequence ID" value="AAO10479.1"/>
    <property type="molecule type" value="Genomic_DNA"/>
</dbReference>
<dbReference type="RefSeq" id="WP_011079977.1">
    <property type="nucleotide sequence ID" value="NC_004459.3"/>
</dbReference>
<dbReference type="SMR" id="P59353"/>
<dbReference type="KEGG" id="vvu:VV1_2091"/>
<dbReference type="HOGENOM" id="CLU_049702_0_0_6"/>
<dbReference type="Proteomes" id="UP000002275">
    <property type="component" value="Chromosome 1"/>
</dbReference>
<dbReference type="HAMAP" id="MF_01232">
    <property type="entry name" value="UPF0229"/>
    <property type="match status" value="1"/>
</dbReference>
<dbReference type="InterPro" id="IPR006698">
    <property type="entry name" value="UPF0229"/>
</dbReference>
<dbReference type="NCBIfam" id="NF003707">
    <property type="entry name" value="PRK05325.1-2"/>
    <property type="match status" value="1"/>
</dbReference>
<dbReference type="NCBIfam" id="NF003708">
    <property type="entry name" value="PRK05325.1-3"/>
    <property type="match status" value="1"/>
</dbReference>
<dbReference type="PANTHER" id="PTHR30510">
    <property type="entry name" value="UPF0229 PROTEIN YEAH"/>
    <property type="match status" value="1"/>
</dbReference>
<dbReference type="PANTHER" id="PTHR30510:SF2">
    <property type="entry name" value="UPF0229 PROTEIN YEAH"/>
    <property type="match status" value="1"/>
</dbReference>
<dbReference type="Pfam" id="PF04285">
    <property type="entry name" value="DUF444"/>
    <property type="match status" value="1"/>
</dbReference>
<gene>
    <name type="ordered locus">VV1_2091</name>
</gene>
<accession>P59353</accession>
<name>Y2091_VIBVU</name>
<feature type="chain" id="PRO_0000068209" description="UPF0229 protein VV1_2091">
    <location>
        <begin position="1"/>
        <end position="423"/>
    </location>
</feature>
<feature type="region of interest" description="Disordered" evidence="2">
    <location>
        <begin position="81"/>
        <end position="111"/>
    </location>
</feature>
<feature type="compositionally biased region" description="Gly residues" evidence="2">
    <location>
        <begin position="93"/>
        <end position="102"/>
    </location>
</feature>
<proteinExistence type="inferred from homology"/>
<protein>
    <recommendedName>
        <fullName evidence="1">UPF0229 protein VV1_2091</fullName>
    </recommendedName>
</protein>
<evidence type="ECO:0000255" key="1">
    <source>
        <dbReference type="HAMAP-Rule" id="MF_01232"/>
    </source>
</evidence>
<evidence type="ECO:0000256" key="2">
    <source>
        <dbReference type="SAM" id="MobiDB-lite"/>
    </source>
</evidence>